<feature type="chain" id="PRO_0000181307" description="Acid-sensing ion channel 4-A">
    <location>
        <begin position="1"/>
        <end position="539"/>
    </location>
</feature>
<feature type="topological domain" description="Cytoplasmic" evidence="7">
    <location>
        <begin position="1"/>
        <end position="68"/>
    </location>
</feature>
<feature type="transmembrane region" description="Helical" evidence="2">
    <location>
        <begin position="69"/>
        <end position="89"/>
    </location>
</feature>
<feature type="topological domain" description="Extracellular" evidence="7">
    <location>
        <begin position="90"/>
        <end position="432"/>
    </location>
</feature>
<feature type="transmembrane region" description="Helical" evidence="2">
    <location>
        <begin position="433"/>
        <end position="453"/>
    </location>
</feature>
<feature type="topological domain" description="Cytoplasmic" evidence="7">
    <location>
        <begin position="454"/>
        <end position="539"/>
    </location>
</feature>
<feature type="region of interest" description="Disordered" evidence="3">
    <location>
        <begin position="474"/>
        <end position="494"/>
    </location>
</feature>
<feature type="short sequence motif" description="GAS motif; ion selectivity filter" evidence="1">
    <location>
        <begin position="446"/>
        <end position="448"/>
    </location>
</feature>
<feature type="glycosylation site" description="N-linked (GlcNAc...) asparagine" evidence="2">
    <location>
        <position position="136"/>
    </location>
</feature>
<feature type="glycosylation site" description="N-linked (GlcNAc...) asparagine" evidence="2">
    <location>
        <position position="165"/>
    </location>
</feature>
<feature type="glycosylation site" description="N-linked (GlcNAc...) asparagine" evidence="2">
    <location>
        <position position="179"/>
    </location>
</feature>
<feature type="glycosylation site" description="N-linked (GlcNAc...) asparagine" evidence="2">
    <location>
        <position position="184"/>
    </location>
</feature>
<feature type="glycosylation site" description="N-linked (GlcNAc...) asparagine" evidence="2">
    <location>
        <position position="206"/>
    </location>
</feature>
<feature type="glycosylation site" description="N-linked (GlcNAc...) asparagine" evidence="2">
    <location>
        <position position="241"/>
    </location>
</feature>
<feature type="glycosylation site" description="N-linked (GlcNAc...) asparagine" evidence="2">
    <location>
        <position position="370"/>
    </location>
</feature>
<feature type="disulfide bond" evidence="1">
    <location>
        <begin position="116"/>
        <end position="200"/>
    </location>
</feature>
<feature type="disulfide bond" evidence="1">
    <location>
        <begin position="178"/>
        <end position="185"/>
    </location>
</feature>
<feature type="disulfide bond" evidence="1">
    <location>
        <begin position="294"/>
        <end position="369"/>
    </location>
</feature>
<feature type="disulfide bond" evidence="1">
    <location>
        <begin position="313"/>
        <end position="365"/>
    </location>
</feature>
<feature type="disulfide bond" evidence="1">
    <location>
        <begin position="317"/>
        <end position="363"/>
    </location>
</feature>
<feature type="disulfide bond" evidence="1">
    <location>
        <begin position="326"/>
        <end position="347"/>
    </location>
</feature>
<feature type="disulfide bond" evidence="1">
    <location>
        <begin position="328"/>
        <end position="340"/>
    </location>
</feature>
<sequence>MPIEFVCKIKFAEEDEKQKGNQDGDKESLIEESCSPPTKDLAGFASASSLHGINHIFVSGRLGVRQTLWALAFLVSLALFLYQAAKCAISYLEHPHVTALNEEATPEMVFPAVTICNINRFRFSALTDADIYHLANLTGLPPKNKDGHKPTDLEYPAPDMQDIFNRTGHQLEEMLKSCNFSGQNCSAEDFTVVYTRYGKCYTFNGNKTTSRKTKQGGMGNGLEIMLDIQQDDYLPIWKETNETSLEAGIRVQIHSQDEPPYIHQLGFGVSPGFQTFVSCQEQRLTYLPQPWGNCRSTSEQMIPGYDTYSISACRLRCETLEVLRECKCRMVHMPGDANICTPSDIKCVDKALALLQKSSGDTCFCETPCNLTRYGKELSMVKIPSKGSARYLSRKYDKSEDYIRDNFLVLDIFFEALNYETIEQKKAYDVAGLLGDIGGQMGLFIGASVLTILEILDYVYEVIKHRLERLLRPQRDDKKQTQQQQQASTVATVNLEEMKAKDSSEMSRSHSEGAYANTILPNHHHHHRTHHRVSEDFAC</sequence>
<comment type="function">
    <text evidence="4 5">Could form pH-gated trimeric sodium channels and function as a postsynaptic excitatory receptors in the nervous system.</text>
</comment>
<comment type="catalytic activity">
    <reaction evidence="4 5">
        <text>Na(+)(in) = Na(+)(out)</text>
        <dbReference type="Rhea" id="RHEA:34963"/>
        <dbReference type="ChEBI" id="CHEBI:29101"/>
    </reaction>
</comment>
<comment type="activity regulation">
    <text evidence="4 5">Inhibited by the diuretic drug amiloride.</text>
</comment>
<comment type="subunit">
    <text evidence="9">Homotrimer. Heterotrimer; with other ASIC proteins producing functional channels.</text>
</comment>
<comment type="subcellular location">
    <subcellularLocation>
        <location evidence="4 5">Cell membrane</location>
        <topology evidence="2">Multi-pass membrane protein</topology>
    </subcellularLocation>
</comment>
<comment type="tissue specificity">
    <text evidence="4">Expressed in central nervous system.</text>
</comment>
<comment type="developmental stage">
    <text evidence="4">First expressed at 48 hours post-fertilization (hpf). Expressed in dorsal midbrain and in retinal ganglion cells.</text>
</comment>
<comment type="similarity">
    <text evidence="7">Belongs to the amiloride-sensitive sodium channel (TC 1.A.6) family. ASIC4 subfamily.</text>
</comment>
<evidence type="ECO:0000250" key="1">
    <source>
        <dbReference type="UniProtKB" id="P78348"/>
    </source>
</evidence>
<evidence type="ECO:0000255" key="2"/>
<evidence type="ECO:0000256" key="3">
    <source>
        <dbReference type="SAM" id="MobiDB-lite"/>
    </source>
</evidence>
<evidence type="ECO:0000269" key="4">
    <source>
    </source>
</evidence>
<evidence type="ECO:0000269" key="5">
    <source>
    </source>
</evidence>
<evidence type="ECO:0000303" key="6">
    <source>
    </source>
</evidence>
<evidence type="ECO:0000305" key="7"/>
<evidence type="ECO:0000305" key="8">
    <source>
    </source>
</evidence>
<evidence type="ECO:0000305" key="9">
    <source>
    </source>
</evidence>
<dbReference type="EMBL" id="AJ609619">
    <property type="protein sequence ID" value="CAE81922.1"/>
    <property type="molecule type" value="mRNA"/>
</dbReference>
<dbReference type="RefSeq" id="NP_999952.1">
    <property type="nucleotide sequence ID" value="NM_214787.2"/>
</dbReference>
<dbReference type="SMR" id="Q708S4"/>
<dbReference type="FunCoup" id="Q708S4">
    <property type="interactions" value="1281"/>
</dbReference>
<dbReference type="STRING" id="7955.ENSDARP00000035525"/>
<dbReference type="TCDB" id="1.A.6.1.6">
    <property type="family name" value="the epithelial na(+) channel (enac) family"/>
</dbReference>
<dbReference type="GlyCosmos" id="Q708S4">
    <property type="glycosylation" value="7 sites, No reported glycans"/>
</dbReference>
<dbReference type="PaxDb" id="7955-ENSDARP00000035525"/>
<dbReference type="GeneID" id="407668"/>
<dbReference type="KEGG" id="dre:407668"/>
<dbReference type="AGR" id="ZFIN:ZDB-GENE-040513-5"/>
<dbReference type="CTD" id="407668"/>
<dbReference type="ZFIN" id="ZDB-GENE-040513-5">
    <property type="gene designation" value="asic4a"/>
</dbReference>
<dbReference type="eggNOG" id="KOG4294">
    <property type="taxonomic scope" value="Eukaryota"/>
</dbReference>
<dbReference type="InParanoid" id="Q708S4"/>
<dbReference type="OrthoDB" id="6502088at2759"/>
<dbReference type="PhylomeDB" id="Q708S4"/>
<dbReference type="Reactome" id="R-DRE-2672351">
    <property type="pathway name" value="Stimuli-sensing channels"/>
</dbReference>
<dbReference type="PRO" id="PR:Q708S4"/>
<dbReference type="Proteomes" id="UP000000437">
    <property type="component" value="Chromosome 9"/>
</dbReference>
<dbReference type="GO" id="GO:0045177">
    <property type="term" value="C:apical part of cell"/>
    <property type="evidence" value="ECO:0000250"/>
    <property type="project" value="AgBase"/>
</dbReference>
<dbReference type="GO" id="GO:0005886">
    <property type="term" value="C:plasma membrane"/>
    <property type="evidence" value="ECO:0000314"/>
    <property type="project" value="ZFIN"/>
</dbReference>
<dbReference type="GO" id="GO:0015280">
    <property type="term" value="F:ligand-gated sodium channel activity"/>
    <property type="evidence" value="ECO:0000314"/>
    <property type="project" value="ZFIN"/>
</dbReference>
<dbReference type="GO" id="GO:0005261">
    <property type="term" value="F:monoatomic cation channel activity"/>
    <property type="evidence" value="ECO:0000353"/>
    <property type="project" value="ZFIN"/>
</dbReference>
<dbReference type="GO" id="GO:0005248">
    <property type="term" value="F:voltage-gated sodium channel activity"/>
    <property type="evidence" value="ECO:0000250"/>
    <property type="project" value="AgBase"/>
</dbReference>
<dbReference type="GO" id="GO:0035725">
    <property type="term" value="P:sodium ion transmembrane transport"/>
    <property type="evidence" value="ECO:0000318"/>
    <property type="project" value="GO_Central"/>
</dbReference>
<dbReference type="FunFam" id="2.60.470.10:FF:000001">
    <property type="entry name" value="Acid-sensing (proton-gated) ion channel family member 4a"/>
    <property type="match status" value="1"/>
</dbReference>
<dbReference type="FunFam" id="1.10.287.770:FF:000001">
    <property type="entry name" value="Acid-sensing ion channel subunit 1"/>
    <property type="match status" value="1"/>
</dbReference>
<dbReference type="Gene3D" id="2.60.470.10">
    <property type="entry name" value="Acid-sensing ion channels like domains"/>
    <property type="match status" value="1"/>
</dbReference>
<dbReference type="Gene3D" id="1.10.287.770">
    <property type="entry name" value="YojJ-like"/>
    <property type="match status" value="1"/>
</dbReference>
<dbReference type="InterPro" id="IPR001873">
    <property type="entry name" value="ENaC"/>
</dbReference>
<dbReference type="InterPro" id="IPR020903">
    <property type="entry name" value="ENaC_CS"/>
</dbReference>
<dbReference type="PANTHER" id="PTHR11690:SF13">
    <property type="entry name" value="ACID-SENSING ION CHANNEL 4"/>
    <property type="match status" value="1"/>
</dbReference>
<dbReference type="PANTHER" id="PTHR11690">
    <property type="entry name" value="AMILORIDE-SENSITIVE SODIUM CHANNEL-RELATED"/>
    <property type="match status" value="1"/>
</dbReference>
<dbReference type="Pfam" id="PF00858">
    <property type="entry name" value="ASC"/>
    <property type="match status" value="1"/>
</dbReference>
<dbReference type="PRINTS" id="PR01078">
    <property type="entry name" value="AMINACHANNEL"/>
</dbReference>
<dbReference type="PROSITE" id="PS01206">
    <property type="entry name" value="ASC"/>
    <property type="match status" value="1"/>
</dbReference>
<accession>Q708S4</accession>
<keyword id="KW-1003">Cell membrane</keyword>
<keyword id="KW-1015">Disulfide bond</keyword>
<keyword id="KW-0325">Glycoprotein</keyword>
<keyword id="KW-0407">Ion channel</keyword>
<keyword id="KW-0406">Ion transport</keyword>
<keyword id="KW-0472">Membrane</keyword>
<keyword id="KW-1185">Reference proteome</keyword>
<keyword id="KW-0915">Sodium</keyword>
<keyword id="KW-0894">Sodium channel</keyword>
<keyword id="KW-0739">Sodium transport</keyword>
<keyword id="KW-0812">Transmembrane</keyword>
<keyword id="KW-1133">Transmembrane helix</keyword>
<keyword id="KW-0813">Transport</keyword>
<proteinExistence type="evidence at protein level"/>
<name>ASI4A_DANRE</name>
<protein>
    <recommendedName>
        <fullName evidence="8">Acid-sensing ion channel 4-A</fullName>
        <shortName evidence="7">ASIC4-A</shortName>
    </recommendedName>
    <alternativeName>
        <fullName evidence="6">Acid-sensing ion channel 4.1</fullName>
    </alternativeName>
    <alternativeName>
        <fullName>Amiloride-sensitive cation channel 4-A</fullName>
    </alternativeName>
    <alternativeName>
        <fullName evidence="6">ZASIC4.1</fullName>
    </alternativeName>
</protein>
<gene>
    <name evidence="7" type="primary">asic4a</name>
    <name evidence="7" type="synonym">accn4a</name>
</gene>
<organism>
    <name type="scientific">Danio rerio</name>
    <name type="common">Zebrafish</name>
    <name type="synonym">Brachydanio rerio</name>
    <dbReference type="NCBI Taxonomy" id="7955"/>
    <lineage>
        <taxon>Eukaryota</taxon>
        <taxon>Metazoa</taxon>
        <taxon>Chordata</taxon>
        <taxon>Craniata</taxon>
        <taxon>Vertebrata</taxon>
        <taxon>Euteleostomi</taxon>
        <taxon>Actinopterygii</taxon>
        <taxon>Neopterygii</taxon>
        <taxon>Teleostei</taxon>
        <taxon>Ostariophysi</taxon>
        <taxon>Cypriniformes</taxon>
        <taxon>Danionidae</taxon>
        <taxon>Danioninae</taxon>
        <taxon>Danio</taxon>
    </lineage>
</organism>
<reference key="1">
    <citation type="journal article" date="2004" name="J. Biol. Chem.">
        <title>A family of acid-sensing ion channels (ASICs) from the zebrafish: widespread expression in the central nervous system suggests a conserved role in neuronal communication.</title>
        <authorList>
            <person name="Paukert M."/>
            <person name="Sidi S."/>
            <person name="Russell C."/>
            <person name="Siba M."/>
            <person name="Wilson S.W."/>
            <person name="Nicolson T."/>
            <person name="Gruender S."/>
        </authorList>
    </citation>
    <scope>NUCLEOTIDE SEQUENCE [MRNA]</scope>
    <scope>FUNCTION</scope>
    <scope>TRANSPORTER ACTIVITY</scope>
    <scope>ACTIVITY REGULATION</scope>
    <scope>SUBCELLULAR LOCATION</scope>
    <scope>TISSUE SPECIFICITY</scope>
    <scope>DEVELOPMENTAL STAGE</scope>
</reference>
<reference key="2">
    <citation type="journal article" date="2007" name="J. Biol. Chem.">
        <title>Zebrafish acid-sensing ion channel (ASIC) 4, characterization of homo- and heteromeric channels, and identification of regions important for activation by H+.</title>
        <authorList>
            <person name="Chen X."/>
            <person name="Polleichtner G."/>
            <person name="Kadurin I."/>
            <person name="Gruender S."/>
        </authorList>
    </citation>
    <scope>FUNCTION</scope>
    <scope>TRANSPORTER ACTIVITY</scope>
    <scope>ACTIVITY REGULATION</scope>
    <scope>SUBUNIT</scope>
    <scope>SUBCELLULAR LOCATION</scope>
</reference>